<reference key="1">
    <citation type="journal article" date="2007" name="Mol. Phylogenet. Evol.">
        <title>Phylogenetic and evolutionary implications of complete chloroplast genome sequences of four early-diverging angiosperms: Buxus (Buxaceae), Chloranthus (Chloranthaceae), Dioscorea (Dioscoreaceae), and Illicium (Schisandraceae).</title>
        <authorList>
            <person name="Hansen D.R."/>
            <person name="Dastidar S.G."/>
            <person name="Cai Z."/>
            <person name="Penaflor C."/>
            <person name="Kuehl J.V."/>
            <person name="Boore J.L."/>
            <person name="Jansen R.K."/>
        </authorList>
    </citation>
    <scope>NUCLEOTIDE SEQUENCE [LARGE SCALE GENOMIC DNA]</scope>
</reference>
<evidence type="ECO:0000255" key="1">
    <source>
        <dbReference type="HAMAP-Rule" id="MF_00059"/>
    </source>
</evidence>
<protein>
    <recommendedName>
        <fullName evidence="1">DNA-directed RNA polymerase subunit alpha</fullName>
        <shortName evidence="1">PEP</shortName>
        <ecNumber evidence="1">2.7.7.6</ecNumber>
    </recommendedName>
    <alternativeName>
        <fullName evidence="1">Plastid-encoded RNA polymerase subunit alpha</fullName>
        <shortName evidence="1">RNA polymerase subunit alpha</shortName>
    </alternativeName>
</protein>
<keyword id="KW-0150">Chloroplast</keyword>
<keyword id="KW-0240">DNA-directed RNA polymerase</keyword>
<keyword id="KW-0548">Nucleotidyltransferase</keyword>
<keyword id="KW-0934">Plastid</keyword>
<keyword id="KW-0804">Transcription</keyword>
<keyword id="KW-0808">Transferase</keyword>
<proteinExistence type="inferred from homology"/>
<name>RPOA_DIOEL</name>
<gene>
    <name evidence="1" type="primary">rpoA</name>
</gene>
<sequence length="337" mass="38966">MVREEIAESTRTLQWKCVESRVDSKRLYYGRFILSPLMKGQADTIGISMRRALLGEIEGTCITRAKSEKVPHEYSTVVGIEESVHEILFNLKEIVLRSNLYEIRDASICVRGPRYVTAQDIISPPYVEIVDTTQYIANLTEPIDLCIELEIKRDRGYRMKPITNSQDGSYPIDAVFMPVRNANHSIHSYGNGNEKQEILFLEIWTNGSLTPKEALYEASRNLIDLFVPFLHAEEEDINFEENKNKFTLPPLTFQDRLSNLKKNKKGIPLKYIFIDQLELPSRTYNCLKRSNIHTLLDLLSKGQENLIKMEYFHIEDVKQILDTLQKHFAVDLPKVLI</sequence>
<accession>A6MMN9</accession>
<organism>
    <name type="scientific">Dioscorea elephantipes</name>
    <name type="common">Elephant's foot yam</name>
    <name type="synonym">Testudinaria elephantipes</name>
    <dbReference type="NCBI Taxonomy" id="145284"/>
    <lineage>
        <taxon>Eukaryota</taxon>
        <taxon>Viridiplantae</taxon>
        <taxon>Streptophyta</taxon>
        <taxon>Embryophyta</taxon>
        <taxon>Tracheophyta</taxon>
        <taxon>Spermatophyta</taxon>
        <taxon>Magnoliopsida</taxon>
        <taxon>Liliopsida</taxon>
        <taxon>Dioscoreales</taxon>
        <taxon>Dioscoreaceae</taxon>
        <taxon>Dioscorea</taxon>
    </lineage>
</organism>
<comment type="function">
    <text evidence="1">DNA-dependent RNA polymerase catalyzes the transcription of DNA into RNA using the four ribonucleoside triphosphates as substrates.</text>
</comment>
<comment type="catalytic activity">
    <reaction evidence="1">
        <text>RNA(n) + a ribonucleoside 5'-triphosphate = RNA(n+1) + diphosphate</text>
        <dbReference type="Rhea" id="RHEA:21248"/>
        <dbReference type="Rhea" id="RHEA-COMP:14527"/>
        <dbReference type="Rhea" id="RHEA-COMP:17342"/>
        <dbReference type="ChEBI" id="CHEBI:33019"/>
        <dbReference type="ChEBI" id="CHEBI:61557"/>
        <dbReference type="ChEBI" id="CHEBI:140395"/>
        <dbReference type="EC" id="2.7.7.6"/>
    </reaction>
</comment>
<comment type="subunit">
    <text evidence="1">In plastids the minimal PEP RNA polymerase catalytic core is composed of four subunits: alpha, beta, beta', and beta''. When a (nuclear-encoded) sigma factor is associated with the core the holoenzyme is formed, which can initiate transcription.</text>
</comment>
<comment type="subcellular location">
    <subcellularLocation>
        <location>Plastid</location>
        <location>Chloroplast</location>
    </subcellularLocation>
</comment>
<comment type="domain">
    <text evidence="1">The N-terminal domain is essential for RNAP assembly and basal transcription, whereas the C-terminal domain is involved in interaction with transcriptional regulators and with upstream promoter elements.</text>
</comment>
<comment type="similarity">
    <text evidence="1">Belongs to the RNA polymerase alpha chain family.</text>
</comment>
<geneLocation type="chloroplast"/>
<dbReference type="EC" id="2.7.7.6" evidence="1"/>
<dbReference type="EMBL" id="EF380353">
    <property type="protein sequence ID" value="ABR01461.1"/>
    <property type="molecule type" value="Genomic_DNA"/>
</dbReference>
<dbReference type="RefSeq" id="YP_001294384.1">
    <property type="nucleotide sequence ID" value="NC_009601.1"/>
</dbReference>
<dbReference type="SMR" id="A6MMN9"/>
<dbReference type="GeneID" id="5236628"/>
<dbReference type="GO" id="GO:0009507">
    <property type="term" value="C:chloroplast"/>
    <property type="evidence" value="ECO:0007669"/>
    <property type="project" value="UniProtKB-SubCell"/>
</dbReference>
<dbReference type="GO" id="GO:0000428">
    <property type="term" value="C:DNA-directed RNA polymerase complex"/>
    <property type="evidence" value="ECO:0007669"/>
    <property type="project" value="UniProtKB-KW"/>
</dbReference>
<dbReference type="GO" id="GO:0005739">
    <property type="term" value="C:mitochondrion"/>
    <property type="evidence" value="ECO:0007669"/>
    <property type="project" value="GOC"/>
</dbReference>
<dbReference type="GO" id="GO:0003677">
    <property type="term" value="F:DNA binding"/>
    <property type="evidence" value="ECO:0007669"/>
    <property type="project" value="UniProtKB-UniRule"/>
</dbReference>
<dbReference type="GO" id="GO:0003899">
    <property type="term" value="F:DNA-directed RNA polymerase activity"/>
    <property type="evidence" value="ECO:0007669"/>
    <property type="project" value="UniProtKB-UniRule"/>
</dbReference>
<dbReference type="GO" id="GO:0046983">
    <property type="term" value="F:protein dimerization activity"/>
    <property type="evidence" value="ECO:0007669"/>
    <property type="project" value="InterPro"/>
</dbReference>
<dbReference type="GO" id="GO:0006351">
    <property type="term" value="P:DNA-templated transcription"/>
    <property type="evidence" value="ECO:0007669"/>
    <property type="project" value="UniProtKB-UniRule"/>
</dbReference>
<dbReference type="CDD" id="cd06928">
    <property type="entry name" value="RNAP_alpha_NTD"/>
    <property type="match status" value="1"/>
</dbReference>
<dbReference type="FunFam" id="2.170.120.12:FF:000001">
    <property type="entry name" value="DNA-directed RNA polymerase subunit alpha"/>
    <property type="match status" value="1"/>
</dbReference>
<dbReference type="FunFam" id="3.30.1360.10:FF:000039">
    <property type="entry name" value="DNA-directed RNA polymerase subunit alpha"/>
    <property type="match status" value="1"/>
</dbReference>
<dbReference type="Gene3D" id="1.10.150.20">
    <property type="entry name" value="5' to 3' exonuclease, C-terminal subdomain"/>
    <property type="match status" value="1"/>
</dbReference>
<dbReference type="Gene3D" id="2.170.120.12">
    <property type="entry name" value="DNA-directed RNA polymerase, insert domain"/>
    <property type="match status" value="1"/>
</dbReference>
<dbReference type="Gene3D" id="3.30.1360.10">
    <property type="entry name" value="RNA polymerase, RBP11-like subunit"/>
    <property type="match status" value="1"/>
</dbReference>
<dbReference type="HAMAP" id="MF_00059">
    <property type="entry name" value="RNApol_bact_RpoA"/>
    <property type="match status" value="1"/>
</dbReference>
<dbReference type="InterPro" id="IPR011262">
    <property type="entry name" value="DNA-dir_RNA_pol_insert"/>
</dbReference>
<dbReference type="InterPro" id="IPR011263">
    <property type="entry name" value="DNA-dir_RNA_pol_RpoA/D/Rpb3"/>
</dbReference>
<dbReference type="InterPro" id="IPR011773">
    <property type="entry name" value="DNA-dir_RpoA"/>
</dbReference>
<dbReference type="InterPro" id="IPR036603">
    <property type="entry name" value="RBP11-like"/>
</dbReference>
<dbReference type="InterPro" id="IPR011260">
    <property type="entry name" value="RNAP_asu_C"/>
</dbReference>
<dbReference type="InterPro" id="IPR036643">
    <property type="entry name" value="RNApol_insert_sf"/>
</dbReference>
<dbReference type="NCBIfam" id="TIGR02027">
    <property type="entry name" value="rpoA"/>
    <property type="match status" value="1"/>
</dbReference>
<dbReference type="Pfam" id="PF01000">
    <property type="entry name" value="RNA_pol_A_bac"/>
    <property type="match status" value="1"/>
</dbReference>
<dbReference type="Pfam" id="PF03118">
    <property type="entry name" value="RNA_pol_A_CTD"/>
    <property type="match status" value="1"/>
</dbReference>
<dbReference type="Pfam" id="PF01193">
    <property type="entry name" value="RNA_pol_L"/>
    <property type="match status" value="1"/>
</dbReference>
<dbReference type="SMART" id="SM00662">
    <property type="entry name" value="RPOLD"/>
    <property type="match status" value="1"/>
</dbReference>
<dbReference type="SUPFAM" id="SSF47789">
    <property type="entry name" value="C-terminal domain of RNA polymerase alpha subunit"/>
    <property type="match status" value="1"/>
</dbReference>
<dbReference type="SUPFAM" id="SSF56553">
    <property type="entry name" value="Insert subdomain of RNA polymerase alpha subunit"/>
    <property type="match status" value="1"/>
</dbReference>
<dbReference type="SUPFAM" id="SSF55257">
    <property type="entry name" value="RBP11-like subunits of RNA polymerase"/>
    <property type="match status" value="1"/>
</dbReference>
<feature type="chain" id="PRO_0000323669" description="DNA-directed RNA polymerase subunit alpha">
    <location>
        <begin position="1"/>
        <end position="337"/>
    </location>
</feature>
<feature type="region of interest" description="Alpha N-terminal domain (alpha-NTD)" evidence="1">
    <location>
        <begin position="1"/>
        <end position="233"/>
    </location>
</feature>
<feature type="region of interest" description="Alpha C-terminal domain (alpha-CTD)" evidence="1">
    <location>
        <begin position="266"/>
        <end position="337"/>
    </location>
</feature>